<protein>
    <recommendedName>
        <fullName evidence="1">Sec-independent protein translocase protein TatA</fullName>
    </recommendedName>
</protein>
<name>TATA_SHESM</name>
<feature type="chain" id="PRO_1000044446" description="Sec-independent protein translocase protein TatA">
    <location>
        <begin position="1"/>
        <end position="85"/>
    </location>
</feature>
<feature type="transmembrane region" description="Helical" evidence="1">
    <location>
        <begin position="1"/>
        <end position="21"/>
    </location>
</feature>
<feature type="region of interest" description="Disordered" evidence="2">
    <location>
        <begin position="43"/>
        <end position="85"/>
    </location>
</feature>
<feature type="compositionally biased region" description="Basic and acidic residues" evidence="2">
    <location>
        <begin position="46"/>
        <end position="57"/>
    </location>
</feature>
<feature type="compositionally biased region" description="Low complexity" evidence="2">
    <location>
        <begin position="58"/>
        <end position="73"/>
    </location>
</feature>
<feature type="compositionally biased region" description="Basic and acidic residues" evidence="2">
    <location>
        <begin position="74"/>
        <end position="85"/>
    </location>
</feature>
<sequence length="85" mass="9024">MGGISIWQLLIIALIVVLLFGTKKLRSLGGDLGGAVKGFKNAMSSEEDKKALEDAEAAKPVQTAQTAQPTQQATEKKPESNKEQA</sequence>
<keyword id="KW-0997">Cell inner membrane</keyword>
<keyword id="KW-1003">Cell membrane</keyword>
<keyword id="KW-0472">Membrane</keyword>
<keyword id="KW-0653">Protein transport</keyword>
<keyword id="KW-0811">Translocation</keyword>
<keyword id="KW-0812">Transmembrane</keyword>
<keyword id="KW-1133">Transmembrane helix</keyword>
<keyword id="KW-0813">Transport</keyword>
<comment type="function">
    <text evidence="1">Part of the twin-arginine translocation (Tat) system that transports large folded proteins containing a characteristic twin-arginine motif in their signal peptide across membranes. TatA could form the protein-conducting channel of the Tat system.</text>
</comment>
<comment type="subunit">
    <text evidence="1">The Tat system comprises two distinct complexes: a TatABC complex, containing multiple copies of TatA, TatB and TatC subunits, and a separate TatA complex, containing only TatA subunits. Substrates initially bind to the TatABC complex, which probably triggers association of the separate TatA complex to form the active translocon.</text>
</comment>
<comment type="subcellular location">
    <subcellularLocation>
        <location evidence="1">Cell inner membrane</location>
        <topology evidence="1">Single-pass membrane protein</topology>
    </subcellularLocation>
</comment>
<comment type="similarity">
    <text evidence="1">Belongs to the TatA/E family.</text>
</comment>
<organism>
    <name type="scientific">Shewanella sp. (strain MR-4)</name>
    <dbReference type="NCBI Taxonomy" id="60480"/>
    <lineage>
        <taxon>Bacteria</taxon>
        <taxon>Pseudomonadati</taxon>
        <taxon>Pseudomonadota</taxon>
        <taxon>Gammaproteobacteria</taxon>
        <taxon>Alteromonadales</taxon>
        <taxon>Shewanellaceae</taxon>
        <taxon>Shewanella</taxon>
    </lineage>
</organism>
<evidence type="ECO:0000255" key="1">
    <source>
        <dbReference type="HAMAP-Rule" id="MF_00236"/>
    </source>
</evidence>
<evidence type="ECO:0000256" key="2">
    <source>
        <dbReference type="SAM" id="MobiDB-lite"/>
    </source>
</evidence>
<accession>Q0HE98</accession>
<gene>
    <name evidence="1" type="primary">tatA</name>
    <name type="ordered locus">Shewmr4_3554</name>
</gene>
<proteinExistence type="inferred from homology"/>
<dbReference type="EMBL" id="CP000446">
    <property type="protein sequence ID" value="ABI40619.1"/>
    <property type="molecule type" value="Genomic_DNA"/>
</dbReference>
<dbReference type="RefSeq" id="WP_011624283.1">
    <property type="nucleotide sequence ID" value="NC_008321.1"/>
</dbReference>
<dbReference type="SMR" id="Q0HE98"/>
<dbReference type="KEGG" id="she:Shewmr4_3554"/>
<dbReference type="HOGENOM" id="CLU_086034_5_1_6"/>
<dbReference type="GO" id="GO:0033281">
    <property type="term" value="C:TAT protein transport complex"/>
    <property type="evidence" value="ECO:0007669"/>
    <property type="project" value="UniProtKB-UniRule"/>
</dbReference>
<dbReference type="GO" id="GO:0008320">
    <property type="term" value="F:protein transmembrane transporter activity"/>
    <property type="evidence" value="ECO:0007669"/>
    <property type="project" value="UniProtKB-UniRule"/>
</dbReference>
<dbReference type="GO" id="GO:0043953">
    <property type="term" value="P:protein transport by the Tat complex"/>
    <property type="evidence" value="ECO:0007669"/>
    <property type="project" value="UniProtKB-UniRule"/>
</dbReference>
<dbReference type="Gene3D" id="1.20.5.3310">
    <property type="match status" value="1"/>
</dbReference>
<dbReference type="HAMAP" id="MF_00236">
    <property type="entry name" value="TatA_E"/>
    <property type="match status" value="1"/>
</dbReference>
<dbReference type="InterPro" id="IPR003369">
    <property type="entry name" value="TatA/B/E"/>
</dbReference>
<dbReference type="InterPro" id="IPR006312">
    <property type="entry name" value="TatA/E"/>
</dbReference>
<dbReference type="NCBIfam" id="NF002813">
    <property type="entry name" value="PRK02958.1"/>
    <property type="match status" value="1"/>
</dbReference>
<dbReference type="NCBIfam" id="TIGR01411">
    <property type="entry name" value="tatAE"/>
    <property type="match status" value="1"/>
</dbReference>
<dbReference type="PANTHER" id="PTHR42982">
    <property type="entry name" value="SEC-INDEPENDENT PROTEIN TRANSLOCASE PROTEIN TATA"/>
    <property type="match status" value="1"/>
</dbReference>
<dbReference type="PANTHER" id="PTHR42982:SF1">
    <property type="entry name" value="SEC-INDEPENDENT PROTEIN TRANSLOCASE PROTEIN TATA"/>
    <property type="match status" value="1"/>
</dbReference>
<dbReference type="Pfam" id="PF02416">
    <property type="entry name" value="TatA_B_E"/>
    <property type="match status" value="1"/>
</dbReference>
<reference key="1">
    <citation type="submission" date="2006-08" db="EMBL/GenBank/DDBJ databases">
        <title>Complete sequence of Shewanella sp. MR-4.</title>
        <authorList>
            <consortium name="US DOE Joint Genome Institute"/>
            <person name="Copeland A."/>
            <person name="Lucas S."/>
            <person name="Lapidus A."/>
            <person name="Barry K."/>
            <person name="Detter J.C."/>
            <person name="Glavina del Rio T."/>
            <person name="Hammon N."/>
            <person name="Israni S."/>
            <person name="Dalin E."/>
            <person name="Tice H."/>
            <person name="Pitluck S."/>
            <person name="Kiss H."/>
            <person name="Brettin T."/>
            <person name="Bruce D."/>
            <person name="Han C."/>
            <person name="Tapia R."/>
            <person name="Gilna P."/>
            <person name="Schmutz J."/>
            <person name="Larimer F."/>
            <person name="Land M."/>
            <person name="Hauser L."/>
            <person name="Kyrpides N."/>
            <person name="Mikhailova N."/>
            <person name="Nealson K."/>
            <person name="Konstantinidis K."/>
            <person name="Klappenbach J."/>
            <person name="Tiedje J."/>
            <person name="Richardson P."/>
        </authorList>
    </citation>
    <scope>NUCLEOTIDE SEQUENCE [LARGE SCALE GENOMIC DNA]</scope>
    <source>
        <strain>MR-4</strain>
    </source>
</reference>